<accession>Q03373</accession>
<accession>D6VTA3</accession>
<feature type="chain" id="PRO_0000079898" description="Down-regulator of invasive growth 2">
    <location>
        <begin position="1"/>
        <end position="323"/>
    </location>
</feature>
<feature type="region of interest" description="Disordered" evidence="1">
    <location>
        <begin position="1"/>
        <end position="26"/>
    </location>
</feature>
<feature type="region of interest" description="Disordered" evidence="1">
    <location>
        <begin position="67"/>
        <end position="87"/>
    </location>
</feature>
<feature type="compositionally biased region" description="Acidic residues" evidence="1">
    <location>
        <begin position="1"/>
        <end position="10"/>
    </location>
</feature>
<feature type="compositionally biased region" description="Polar residues" evidence="1">
    <location>
        <begin position="11"/>
        <end position="26"/>
    </location>
</feature>
<feature type="modified residue" description="Phosphoserine" evidence="10">
    <location>
        <position position="34"/>
    </location>
</feature>
<feature type="modified residue" description="Phosphoserine" evidence="9 10 11">
    <location>
        <position position="225"/>
    </location>
</feature>
<feature type="modified residue" description="Phosphoserine" evidence="12">
    <location>
        <position position="266"/>
    </location>
</feature>
<feature type="modified residue" description="Phosphoserine" evidence="12">
    <location>
        <position position="270"/>
    </location>
</feature>
<organism>
    <name type="scientific">Saccharomyces cerevisiae (strain ATCC 204508 / S288c)</name>
    <name type="common">Baker's yeast</name>
    <dbReference type="NCBI Taxonomy" id="559292"/>
    <lineage>
        <taxon>Eukaryota</taxon>
        <taxon>Fungi</taxon>
        <taxon>Dikarya</taxon>
        <taxon>Ascomycota</taxon>
        <taxon>Saccharomycotina</taxon>
        <taxon>Saccharomycetes</taxon>
        <taxon>Saccharomycetales</taxon>
        <taxon>Saccharomycetaceae</taxon>
        <taxon>Saccharomyces</taxon>
    </lineage>
</organism>
<evidence type="ECO:0000256" key="1">
    <source>
        <dbReference type="SAM" id="MobiDB-lite"/>
    </source>
</evidence>
<evidence type="ECO:0000269" key="2">
    <source>
    </source>
</evidence>
<evidence type="ECO:0000269" key="3">
    <source>
    </source>
</evidence>
<evidence type="ECO:0000269" key="4">
    <source>
    </source>
</evidence>
<evidence type="ECO:0000269" key="5">
    <source>
    </source>
</evidence>
<evidence type="ECO:0000269" key="6">
    <source>
    </source>
</evidence>
<evidence type="ECO:0000269" key="7">
    <source>
    </source>
</evidence>
<evidence type="ECO:0000269" key="8">
    <source>
    </source>
</evidence>
<evidence type="ECO:0007744" key="9">
    <source>
    </source>
</evidence>
<evidence type="ECO:0007744" key="10">
    <source>
    </source>
</evidence>
<evidence type="ECO:0007744" key="11">
    <source>
    </source>
</evidence>
<evidence type="ECO:0007744" key="12">
    <source>
    </source>
</evidence>
<protein>
    <recommendedName>
        <fullName>Down-regulator of invasive growth 2</fullName>
    </recommendedName>
    <alternativeName>
        <fullName>Regulator of STE12 protein 2</fullName>
    </alternativeName>
    <alternativeName>
        <fullName>Regulator of sterile twelve 2</fullName>
    </alternativeName>
</protein>
<name>DIG2_YEAST</name>
<comment type="function">
    <text evidence="2 3 5 6 7 8">DIG2 and DIG1 are negative regulators of the filamentation and pheromone induced mating program. DIG1 and DIG2 inhibit the transcriptional activity of STE12 by direct protein-protein interaction. DIG2 binds to the DNA binding domain (DBD) of STE12 and thus inhibits transcription when overexpressed.</text>
</comment>
<comment type="subunit">
    <text>Forms a complex with DIG1, STE12 and either FUS3 or KSS1. The interaction of FUS3 with STE12 depends on the presence of both DIG1 and DIG2. STE12 is lost from FUS3/DIG1/DIG2 complex after pheromone treatment. DIG1 and DIG2 have also been reported to interact with CLN1 and CLN2.</text>
</comment>
<comment type="interaction">
    <interactant intactId="EBI-34019">
        <id>Q03373</id>
    </interactant>
    <interactant intactId="EBI-29752">
        <id>Q03063</id>
        <label>DIG1</label>
    </interactant>
    <organismsDiffer>false</organismsDiffer>
    <experiments>6</experiments>
</comment>
<comment type="interaction">
    <interactant intactId="EBI-34019">
        <id>Q03373</id>
    </interactant>
    <interactant intactId="EBI-9945">
        <id>P14681</id>
        <label>KSS1</label>
    </interactant>
    <organismsDiffer>false</organismsDiffer>
    <experiments>5</experiments>
</comment>
<comment type="interaction">
    <interactant intactId="EBI-34019">
        <id>Q03373</id>
    </interactant>
    <interactant intactId="EBI-18264">
        <id>P13574</id>
        <label>STE12</label>
    </interactant>
    <organismsDiffer>false</organismsDiffer>
    <experiments>10</experiments>
</comment>
<comment type="subcellular location">
    <subcellularLocation>
        <location>Nucleus</location>
    </subcellularLocation>
</comment>
<comment type="induction">
    <text evidence="3">By pheromone.</text>
</comment>
<comment type="PTM">
    <text evidence="3 5">Phosphorylated by FUS3 and KSS1, in a pheromone-stimulated manner.</text>
</comment>
<comment type="miscellaneous">
    <text evidence="4">Present with 1310 molecules/cell in log phase SD medium.</text>
</comment>
<gene>
    <name type="primary">DIG2</name>
    <name type="synonym">RST2</name>
    <name type="ordered locus">YDR480W</name>
    <name type="ORF">D8035.23</name>
</gene>
<keyword id="KW-0539">Nucleus</keyword>
<keyword id="KW-0597">Phosphoprotein</keyword>
<keyword id="KW-1185">Reference proteome</keyword>
<sequence>MNKEEQEDPQQEQISTVQENDPRNLQQLGMLLVSPGLDEDRLSEKMISKIKKSRDIEKNQKLLISRLSQKEEDHSGKPPTITTSPAEKTVPFKSLNHSLKRKRVPPALNFSDIQASSHLHGSKSAPPNITRFPQHKNSLRVRYMGRMAPTNQDYHPSVANSYMTATYPYPYTGLPPVPCYPYSSTPTQTHAYEGYYSPMYPGPLYNNGIIPADYHAKRKKLAGRSPHLEDLTSRKRTFVSKHHNGDPIISKTDEDIECSVTKNSLSEGASLNDDADDDNDKERIIIGEISLYDDVFKFEVRDDKNDYMKACETIWTEWHNLKK</sequence>
<dbReference type="EMBL" id="U33050">
    <property type="protein sequence ID" value="AAB64911.1"/>
    <property type="molecule type" value="Genomic_DNA"/>
</dbReference>
<dbReference type="EMBL" id="BK006938">
    <property type="protein sequence ID" value="DAA12313.1"/>
    <property type="molecule type" value="Genomic_DNA"/>
</dbReference>
<dbReference type="PIR" id="S69647">
    <property type="entry name" value="S69647"/>
</dbReference>
<dbReference type="RefSeq" id="NP_010768.1">
    <property type="nucleotide sequence ID" value="NM_001180788.1"/>
</dbReference>
<dbReference type="SMR" id="Q03373"/>
<dbReference type="BioGRID" id="32532">
    <property type="interactions" value="90"/>
</dbReference>
<dbReference type="ComplexPortal" id="CPX-575">
    <property type="entry name" value="Ste12/Dig1/Dig2 transcription regulation complex"/>
</dbReference>
<dbReference type="DIP" id="DIP-1292N"/>
<dbReference type="FunCoup" id="Q03373">
    <property type="interactions" value="245"/>
</dbReference>
<dbReference type="IntAct" id="Q03373">
    <property type="interactions" value="44"/>
</dbReference>
<dbReference type="MINT" id="Q03373"/>
<dbReference type="STRING" id="4932.YDR480W"/>
<dbReference type="GlyGen" id="Q03373">
    <property type="glycosylation" value="2 sites, 1 O-linked glycan (2 sites)"/>
</dbReference>
<dbReference type="iPTMnet" id="Q03373"/>
<dbReference type="PaxDb" id="4932-YDR480W"/>
<dbReference type="PeptideAtlas" id="Q03373"/>
<dbReference type="EnsemblFungi" id="YDR480W_mRNA">
    <property type="protein sequence ID" value="YDR480W"/>
    <property type="gene ID" value="YDR480W"/>
</dbReference>
<dbReference type="GeneID" id="852091"/>
<dbReference type="KEGG" id="sce:YDR480W"/>
<dbReference type="AGR" id="SGD:S000002888"/>
<dbReference type="SGD" id="S000002888">
    <property type="gene designation" value="DIG2"/>
</dbReference>
<dbReference type="VEuPathDB" id="FungiDB:YDR480W"/>
<dbReference type="HOGENOM" id="CLU_074653_0_0_1"/>
<dbReference type="InParanoid" id="Q03373"/>
<dbReference type="OrthoDB" id="4041625at2759"/>
<dbReference type="BioCyc" id="YEAST:G3O-30006-MONOMER"/>
<dbReference type="BioGRID-ORCS" id="852091">
    <property type="hits" value="0 hits in 10 CRISPR screens"/>
</dbReference>
<dbReference type="PRO" id="PR:Q03373"/>
<dbReference type="Proteomes" id="UP000002311">
    <property type="component" value="Chromosome IV"/>
</dbReference>
<dbReference type="RNAct" id="Q03373">
    <property type="molecule type" value="protein"/>
</dbReference>
<dbReference type="GO" id="GO:0005634">
    <property type="term" value="C:nucleus"/>
    <property type="evidence" value="ECO:0000314"/>
    <property type="project" value="SGD"/>
</dbReference>
<dbReference type="GO" id="GO:1990526">
    <property type="term" value="C:Ste12p-Dig1p-Dig2p complex"/>
    <property type="evidence" value="ECO:0000314"/>
    <property type="project" value="SGD"/>
</dbReference>
<dbReference type="GO" id="GO:0003714">
    <property type="term" value="F:transcription corepressor activity"/>
    <property type="evidence" value="ECO:0000314"/>
    <property type="project" value="SGD"/>
</dbReference>
<dbReference type="GO" id="GO:0071444">
    <property type="term" value="P:cellular response to pheromone"/>
    <property type="evidence" value="ECO:0000316"/>
    <property type="project" value="SGD"/>
</dbReference>
<dbReference type="GO" id="GO:2000218">
    <property type="term" value="P:negative regulation of invasive growth in response to glucose limitation"/>
    <property type="evidence" value="ECO:0000316"/>
    <property type="project" value="SGD"/>
</dbReference>
<dbReference type="GO" id="GO:0045894">
    <property type="term" value="P:negative regulation of mating-type specific transcription, DNA-templated"/>
    <property type="evidence" value="ECO:0000303"/>
    <property type="project" value="ComplexPortal"/>
</dbReference>
<dbReference type="GO" id="GO:2000221">
    <property type="term" value="P:negative regulation of pseudohyphal growth"/>
    <property type="evidence" value="ECO:0000316"/>
    <property type="project" value="SGD"/>
</dbReference>
<dbReference type="GO" id="GO:0000122">
    <property type="term" value="P:negative regulation of transcription by RNA polymerase II"/>
    <property type="evidence" value="ECO:0000316"/>
    <property type="project" value="SGD"/>
</dbReference>
<reference key="1">
    <citation type="journal article" date="1997" name="Nature">
        <title>The nucleotide sequence of Saccharomyces cerevisiae chromosome IV.</title>
        <authorList>
            <person name="Jacq C."/>
            <person name="Alt-Moerbe J."/>
            <person name="Andre B."/>
            <person name="Arnold W."/>
            <person name="Bahr A."/>
            <person name="Ballesta J.P.G."/>
            <person name="Bargues M."/>
            <person name="Baron L."/>
            <person name="Becker A."/>
            <person name="Biteau N."/>
            <person name="Bloecker H."/>
            <person name="Blugeon C."/>
            <person name="Boskovic J."/>
            <person name="Brandt P."/>
            <person name="Brueckner M."/>
            <person name="Buitrago M.J."/>
            <person name="Coster F."/>
            <person name="Delaveau T."/>
            <person name="del Rey F."/>
            <person name="Dujon B."/>
            <person name="Eide L.G."/>
            <person name="Garcia-Cantalejo J.M."/>
            <person name="Goffeau A."/>
            <person name="Gomez-Peris A."/>
            <person name="Granotier C."/>
            <person name="Hanemann V."/>
            <person name="Hankeln T."/>
            <person name="Hoheisel J.D."/>
            <person name="Jaeger W."/>
            <person name="Jimenez A."/>
            <person name="Jonniaux J.-L."/>
            <person name="Kraemer C."/>
            <person name="Kuester H."/>
            <person name="Laamanen P."/>
            <person name="Legros Y."/>
            <person name="Louis E.J."/>
            <person name="Moeller-Rieker S."/>
            <person name="Monnet A."/>
            <person name="Moro M."/>
            <person name="Mueller-Auer S."/>
            <person name="Nussbaumer B."/>
            <person name="Paricio N."/>
            <person name="Paulin L."/>
            <person name="Perea J."/>
            <person name="Perez-Alonso M."/>
            <person name="Perez-Ortin J.E."/>
            <person name="Pohl T.M."/>
            <person name="Prydz H."/>
            <person name="Purnelle B."/>
            <person name="Rasmussen S.W."/>
            <person name="Remacha M.A."/>
            <person name="Revuelta J.L."/>
            <person name="Rieger M."/>
            <person name="Salom D."/>
            <person name="Saluz H.P."/>
            <person name="Saiz J.E."/>
            <person name="Saren A.-M."/>
            <person name="Schaefer M."/>
            <person name="Scharfe M."/>
            <person name="Schmidt E.R."/>
            <person name="Schneider C."/>
            <person name="Scholler P."/>
            <person name="Schwarz S."/>
            <person name="Soler-Mira A."/>
            <person name="Urrestarazu L.A."/>
            <person name="Verhasselt P."/>
            <person name="Vissers S."/>
            <person name="Voet M."/>
            <person name="Volckaert G."/>
            <person name="Wagner G."/>
            <person name="Wambutt R."/>
            <person name="Wedler E."/>
            <person name="Wedler H."/>
            <person name="Woelfl S."/>
            <person name="Harris D.E."/>
            <person name="Bowman S."/>
            <person name="Brown D."/>
            <person name="Churcher C.M."/>
            <person name="Connor R."/>
            <person name="Dedman K."/>
            <person name="Gentles S."/>
            <person name="Hamlin N."/>
            <person name="Hunt S."/>
            <person name="Jones L."/>
            <person name="McDonald S."/>
            <person name="Murphy L.D."/>
            <person name="Niblett D."/>
            <person name="Odell C."/>
            <person name="Oliver K."/>
            <person name="Rajandream M.A."/>
            <person name="Richards C."/>
            <person name="Shore L."/>
            <person name="Walsh S.V."/>
            <person name="Barrell B.G."/>
            <person name="Dietrich F.S."/>
            <person name="Mulligan J.T."/>
            <person name="Allen E."/>
            <person name="Araujo R."/>
            <person name="Aviles E."/>
            <person name="Berno A."/>
            <person name="Carpenter J."/>
            <person name="Chen E."/>
            <person name="Cherry J.M."/>
            <person name="Chung E."/>
            <person name="Duncan M."/>
            <person name="Hunicke-Smith S."/>
            <person name="Hyman R.W."/>
            <person name="Komp C."/>
            <person name="Lashkari D."/>
            <person name="Lew H."/>
            <person name="Lin D."/>
            <person name="Mosedale D."/>
            <person name="Nakahara K."/>
            <person name="Namath A."/>
            <person name="Oefner P."/>
            <person name="Oh C."/>
            <person name="Petel F.X."/>
            <person name="Roberts D."/>
            <person name="Schramm S."/>
            <person name="Schroeder M."/>
            <person name="Shogren T."/>
            <person name="Shroff N."/>
            <person name="Winant A."/>
            <person name="Yelton M.A."/>
            <person name="Botstein D."/>
            <person name="Davis R.W."/>
            <person name="Johnston M."/>
            <person name="Andrews S."/>
            <person name="Brinkman R."/>
            <person name="Cooper J."/>
            <person name="Ding H."/>
            <person name="Du Z."/>
            <person name="Favello A."/>
            <person name="Fulton L."/>
            <person name="Gattung S."/>
            <person name="Greco T."/>
            <person name="Hallsworth K."/>
            <person name="Hawkins J."/>
            <person name="Hillier L.W."/>
            <person name="Jier M."/>
            <person name="Johnson D."/>
            <person name="Johnston L."/>
            <person name="Kirsten J."/>
            <person name="Kucaba T."/>
            <person name="Langston Y."/>
            <person name="Latreille P."/>
            <person name="Le T."/>
            <person name="Mardis E."/>
            <person name="Menezes S."/>
            <person name="Miller N."/>
            <person name="Nhan M."/>
            <person name="Pauley A."/>
            <person name="Peluso D."/>
            <person name="Rifkin L."/>
            <person name="Riles L."/>
            <person name="Taich A."/>
            <person name="Trevaskis E."/>
            <person name="Vignati D."/>
            <person name="Wilcox L."/>
            <person name="Wohldman P."/>
            <person name="Vaudin M."/>
            <person name="Wilson R."/>
            <person name="Waterston R."/>
            <person name="Albermann K."/>
            <person name="Hani J."/>
            <person name="Heumann K."/>
            <person name="Kleine K."/>
            <person name="Mewes H.-W."/>
            <person name="Zollner A."/>
            <person name="Zaccaria P."/>
        </authorList>
    </citation>
    <scope>NUCLEOTIDE SEQUENCE [LARGE SCALE GENOMIC DNA]</scope>
    <source>
        <strain>ATCC 204508 / S288c</strain>
    </source>
</reference>
<reference key="2">
    <citation type="journal article" date="2014" name="G3 (Bethesda)">
        <title>The reference genome sequence of Saccharomyces cerevisiae: Then and now.</title>
        <authorList>
            <person name="Engel S.R."/>
            <person name="Dietrich F.S."/>
            <person name="Fisk D.G."/>
            <person name="Binkley G."/>
            <person name="Balakrishnan R."/>
            <person name="Costanzo M.C."/>
            <person name="Dwight S.S."/>
            <person name="Hitz B.C."/>
            <person name="Karra K."/>
            <person name="Nash R.S."/>
            <person name="Weng S."/>
            <person name="Wong E.D."/>
            <person name="Lloyd P."/>
            <person name="Skrzypek M.S."/>
            <person name="Miyasato S.R."/>
            <person name="Simison M."/>
            <person name="Cherry J.M."/>
        </authorList>
    </citation>
    <scope>GENOME REANNOTATION</scope>
    <source>
        <strain>ATCC 204508 / S288c</strain>
    </source>
</reference>
<reference key="3">
    <citation type="journal article" date="1996" name="Genes Dev.">
        <title>Two novel targets of the MAP kinase Kss1 are negative regulators of invasive growth in the yeast Saccharomyces cerevisiae.</title>
        <authorList>
            <person name="Cook J.G."/>
            <person name="Bardwell L."/>
            <person name="Kron S.J."/>
            <person name="Thorner J."/>
        </authorList>
    </citation>
    <scope>FUNCTION</scope>
    <scope>INTERACTION WITH STE12 AND KSS1</scope>
    <scope>PHOSPHORYLATION BY KSS1</scope>
</reference>
<reference key="4">
    <citation type="journal article" date="1997" name="Curr. Biol.">
        <title>Regulation of the mating pheromone and invasive growth responses in yeast by two MAP kinase substrates.</title>
        <authorList>
            <person name="Tedford K."/>
            <person name="Kim S."/>
            <person name="Sa D."/>
            <person name="Stevens K."/>
            <person name="Tyers M."/>
        </authorList>
    </citation>
    <scope>FUNCTION</scope>
    <scope>COMPLEX WITH DIG1; FUS3 AND STE12</scope>
    <scope>INTERACTION WITH CLN1 AND CLN2</scope>
</reference>
<reference key="5">
    <citation type="journal article" date="1998" name="Genes Dev.">
        <title>Repression of yeast Ste12 transcription factor by direct binding of unphosphorylated Kss1 MAPK and its regulation by the Ste7 MEK.</title>
        <authorList>
            <person name="Bardwell L."/>
            <person name="Cook J.G."/>
            <person name="Voora D."/>
            <person name="Baggott D.M."/>
            <person name="Martinez A.R."/>
            <person name="Thorner J."/>
        </authorList>
    </citation>
    <scope>FUNCTION</scope>
    <scope>COMPLEX WITH DIG1; KSS1 AND STE12</scope>
</reference>
<reference key="6">
    <citation type="journal article" date="1998" name="Proc. Natl. Acad. Sci. U.S.A.">
        <title>Differential regulation of transcription: repression by unactivated mitogen-activated protein kinase Kss1 requires the Dig1 and Dig2 proteins.</title>
        <authorList>
            <person name="Bardwell L."/>
            <person name="Cook J.G."/>
            <person name="Zhu-Shimoni J.X."/>
            <person name="Voora D."/>
            <person name="Thorner J."/>
        </authorList>
    </citation>
    <scope>FUNCTION</scope>
</reference>
<reference key="7">
    <citation type="journal article" date="2000" name="Mol. Cell. Biol.">
        <title>Two regulators of Ste12p inhibit pheromone-responsive transcription by separate mechanisms.</title>
        <authorList>
            <person name="Olson K.A."/>
            <person name="Nelson C."/>
            <person name="Tai G."/>
            <person name="Hung W."/>
            <person name="Yong C."/>
            <person name="Astell C."/>
            <person name="Sadowski I."/>
        </authorList>
    </citation>
    <scope>FUNCTION</scope>
    <scope>INTERACTION WITH STE12</scope>
</reference>
<reference key="8">
    <citation type="journal article" date="2002" name="Mol. Microbiol.">
        <title>Rst1 and Rst2 are required for the a/alpha diploid cell type in yeast.</title>
        <authorList>
            <person name="Gelli A."/>
        </authorList>
    </citation>
    <scope>FUNCTION</scope>
    <scope>PHOSPHORYLATION BY FUS3</scope>
    <scope>REPRESSION OF HAPLOID SPECIFIC AND A-SPECIFIC GENES</scope>
</reference>
<reference key="9">
    <citation type="journal article" date="2003" name="Nature">
        <title>Global analysis of protein expression in yeast.</title>
        <authorList>
            <person name="Ghaemmaghami S."/>
            <person name="Huh W.-K."/>
            <person name="Bower K."/>
            <person name="Howson R.W."/>
            <person name="Belle A."/>
            <person name="Dephoure N."/>
            <person name="O'Shea E.K."/>
            <person name="Weissman J.S."/>
        </authorList>
    </citation>
    <scope>LEVEL OF PROTEIN EXPRESSION [LARGE SCALE ANALYSIS]</scope>
</reference>
<reference key="10">
    <citation type="journal article" date="2007" name="J. Proteome Res.">
        <title>Large-scale phosphorylation analysis of alpha-factor-arrested Saccharomyces cerevisiae.</title>
        <authorList>
            <person name="Li X."/>
            <person name="Gerber S.A."/>
            <person name="Rudner A.D."/>
            <person name="Beausoleil S.A."/>
            <person name="Haas W."/>
            <person name="Villen J."/>
            <person name="Elias J.E."/>
            <person name="Gygi S.P."/>
        </authorList>
    </citation>
    <scope>PHOSPHORYLATION [LARGE SCALE ANALYSIS] AT SER-34 AND SER-225</scope>
    <scope>IDENTIFICATION BY MASS SPECTROMETRY [LARGE SCALE ANALYSIS]</scope>
    <source>
        <strain>ADR376</strain>
    </source>
</reference>
<reference key="11">
    <citation type="journal article" date="2007" name="Proc. Natl. Acad. Sci. U.S.A.">
        <title>Analysis of phosphorylation sites on proteins from Saccharomyces cerevisiae by electron transfer dissociation (ETD) mass spectrometry.</title>
        <authorList>
            <person name="Chi A."/>
            <person name="Huttenhower C."/>
            <person name="Geer L.Y."/>
            <person name="Coon J.J."/>
            <person name="Syka J.E.P."/>
            <person name="Bai D.L."/>
            <person name="Shabanowitz J."/>
            <person name="Burke D.J."/>
            <person name="Troyanskaya O.G."/>
            <person name="Hunt D.F."/>
        </authorList>
    </citation>
    <scope>PHOSPHORYLATION [LARGE SCALE ANALYSIS] AT SER-225</scope>
    <scope>IDENTIFICATION BY MASS SPECTROMETRY [LARGE SCALE ANALYSIS]</scope>
</reference>
<reference key="12">
    <citation type="journal article" date="2008" name="Mol. Cell. Proteomics">
        <title>A multidimensional chromatography technology for in-depth phosphoproteome analysis.</title>
        <authorList>
            <person name="Albuquerque C.P."/>
            <person name="Smolka M.B."/>
            <person name="Payne S.H."/>
            <person name="Bafna V."/>
            <person name="Eng J."/>
            <person name="Zhou H."/>
        </authorList>
    </citation>
    <scope>PHOSPHORYLATION [LARGE SCALE ANALYSIS] AT SER-225</scope>
    <scope>IDENTIFICATION BY MASS SPECTROMETRY [LARGE SCALE ANALYSIS]</scope>
</reference>
<reference key="13">
    <citation type="journal article" date="2009" name="Science">
        <title>Global analysis of Cdk1 substrate phosphorylation sites provides insights into evolution.</title>
        <authorList>
            <person name="Holt L.J."/>
            <person name="Tuch B.B."/>
            <person name="Villen J."/>
            <person name="Johnson A.D."/>
            <person name="Gygi S.P."/>
            <person name="Morgan D.O."/>
        </authorList>
    </citation>
    <scope>PHOSPHORYLATION [LARGE SCALE ANALYSIS] AT SER-266 AND SER-270</scope>
    <scope>IDENTIFICATION BY MASS SPECTROMETRY [LARGE SCALE ANALYSIS]</scope>
</reference>
<reference key="14">
    <citation type="journal article" date="2012" name="Proc. Natl. Acad. Sci. U.S.A.">
        <title>N-terminal acetylome analyses and functional insights of the N-terminal acetyltransferase NatB.</title>
        <authorList>
            <person name="Van Damme P."/>
            <person name="Lasa M."/>
            <person name="Polevoda B."/>
            <person name="Gazquez C."/>
            <person name="Elosegui-Artola A."/>
            <person name="Kim D.S."/>
            <person name="De Juan-Pardo E."/>
            <person name="Demeyer K."/>
            <person name="Hole K."/>
            <person name="Larrea E."/>
            <person name="Timmerman E."/>
            <person name="Prieto J."/>
            <person name="Arnesen T."/>
            <person name="Sherman F."/>
            <person name="Gevaert K."/>
            <person name="Aldabe R."/>
        </authorList>
    </citation>
    <scope>IDENTIFICATION BY MASS SPECTROMETRY [LARGE SCALE ANALYSIS]</scope>
</reference>
<proteinExistence type="evidence at protein level"/>